<organism>
    <name type="scientific">Staphylococcus saprophyticus subsp. saprophyticus (strain ATCC 15305 / DSM 20229 / NCIMB 8711 / NCTC 7292 / S-41)</name>
    <dbReference type="NCBI Taxonomy" id="342451"/>
    <lineage>
        <taxon>Bacteria</taxon>
        <taxon>Bacillati</taxon>
        <taxon>Bacillota</taxon>
        <taxon>Bacilli</taxon>
        <taxon>Bacillales</taxon>
        <taxon>Staphylococcaceae</taxon>
        <taxon>Staphylococcus</taxon>
    </lineage>
</organism>
<protein>
    <recommendedName>
        <fullName evidence="1">Pyridinium-3,5-bisthiocarboxylic acid mononucleotide nickel insertion protein</fullName>
        <shortName evidence="1">P2TMN nickel insertion protein</shortName>
        <ecNumber evidence="1">4.99.1.12</ecNumber>
    </recommendedName>
    <alternativeName>
        <fullName evidence="1">Nickel-pincer cofactor biosynthesis protein LarC</fullName>
    </alternativeName>
</protein>
<feature type="chain" id="PRO_0000146853" description="Pyridinium-3,5-bisthiocarboxylic acid mononucleotide nickel insertion protein">
    <location>
        <begin position="1"/>
        <end position="391"/>
    </location>
</feature>
<proteinExistence type="inferred from homology"/>
<accession>Q4A0S3</accession>
<sequence>MTNGLYLDCHAGIAGDMLLSSLVDLGADVDYVHQHLLSLPLDQFSLNFAKKNKQGIQAMGLTIDFEEAHHHRKASDIFNMINESTLPNRVKERSMLIFDVIAQAEAKIHGMKIEDVHFHEVGAMDSIIDIIGSCLALEDLGIDEIKSSPVPTGNGKIKIAHGIYPIPAPATAEILKDIPLATFDVQSELTTPTGAAFIKALATHIGPLSAVSMSNIGYGCGTKDFEFPNVIRAIQYTATETTPNQVQVLECQIDDMTPETLGYFIEQVINEGALDAFYTPITMKKSRPATQLTVISSVTQAKEFEDFILKHTTSLGVRSYAVNRKILHRQFQTIHTTYGAILVKLAMKDNKIIKAKPEFEDVKNAALHSGQSFTNVYNDIQNEVRKHIQID</sequence>
<comment type="function">
    <text evidence="1">Involved in the biosynthesis of a nickel-pincer cofactor ((SCS)Ni(II) pincer complex). Binds Ni(2+), and functions in nickel delivery to pyridinium-3,5-bisthiocarboxylic acid mononucleotide (P2TMN), to form the mature cofactor. Is thus probably required for the activation of nickel-pincer cofactor-dependent enzymes.</text>
</comment>
<comment type="catalytic activity">
    <reaction evidence="1">
        <text>Ni(II)-pyridinium-3,5-bisthiocarboxylate mononucleotide = pyridinium-3,5-bisthiocarboxylate mononucleotide + Ni(2+)</text>
        <dbReference type="Rhea" id="RHEA:54784"/>
        <dbReference type="ChEBI" id="CHEBI:49786"/>
        <dbReference type="ChEBI" id="CHEBI:137372"/>
        <dbReference type="ChEBI" id="CHEBI:137373"/>
        <dbReference type="EC" id="4.99.1.12"/>
    </reaction>
</comment>
<comment type="similarity">
    <text evidence="1">Belongs to the LarC family.</text>
</comment>
<keyword id="KW-0456">Lyase</keyword>
<keyword id="KW-0533">Nickel</keyword>
<keyword id="KW-1185">Reference proteome</keyword>
<evidence type="ECO:0000255" key="1">
    <source>
        <dbReference type="HAMAP-Rule" id="MF_01074"/>
    </source>
</evidence>
<dbReference type="EC" id="4.99.1.12" evidence="1"/>
<dbReference type="EMBL" id="AP008934">
    <property type="protein sequence ID" value="BAE17319.1"/>
    <property type="molecule type" value="Genomic_DNA"/>
</dbReference>
<dbReference type="RefSeq" id="WP_011302170.1">
    <property type="nucleotide sequence ID" value="NZ_MTGA01000037.1"/>
</dbReference>
<dbReference type="SMR" id="Q4A0S3"/>
<dbReference type="GeneID" id="3615473"/>
<dbReference type="KEGG" id="ssp:SSP0174"/>
<dbReference type="PATRIC" id="fig|342451.11.peg.179"/>
<dbReference type="eggNOG" id="COG1641">
    <property type="taxonomic scope" value="Bacteria"/>
</dbReference>
<dbReference type="HOGENOM" id="CLU_028523_2_1_9"/>
<dbReference type="OrthoDB" id="9765625at2"/>
<dbReference type="Proteomes" id="UP000006371">
    <property type="component" value="Chromosome"/>
</dbReference>
<dbReference type="GO" id="GO:0016829">
    <property type="term" value="F:lyase activity"/>
    <property type="evidence" value="ECO:0007669"/>
    <property type="project" value="UniProtKB-UniRule"/>
</dbReference>
<dbReference type="GO" id="GO:0016151">
    <property type="term" value="F:nickel cation binding"/>
    <property type="evidence" value="ECO:0007669"/>
    <property type="project" value="UniProtKB-UniRule"/>
</dbReference>
<dbReference type="GO" id="GO:0051604">
    <property type="term" value="P:protein maturation"/>
    <property type="evidence" value="ECO:0007669"/>
    <property type="project" value="UniProtKB-UniRule"/>
</dbReference>
<dbReference type="Gene3D" id="3.10.20.300">
    <property type="entry name" value="mk0293 like domain"/>
    <property type="match status" value="1"/>
</dbReference>
<dbReference type="Gene3D" id="3.30.70.1380">
    <property type="entry name" value="Transcriptional regulatory protein pf0864 domain like"/>
    <property type="match status" value="1"/>
</dbReference>
<dbReference type="HAMAP" id="MF_01074">
    <property type="entry name" value="LarC"/>
    <property type="match status" value="1"/>
</dbReference>
<dbReference type="InterPro" id="IPR002822">
    <property type="entry name" value="Ni_insertion"/>
</dbReference>
<dbReference type="NCBIfam" id="TIGR00299">
    <property type="entry name" value="nickel pincer cofactor biosynthesis protein LarC"/>
    <property type="match status" value="1"/>
</dbReference>
<dbReference type="PANTHER" id="PTHR36566">
    <property type="entry name" value="NICKEL INSERTION PROTEIN-RELATED"/>
    <property type="match status" value="1"/>
</dbReference>
<dbReference type="PANTHER" id="PTHR36566:SF1">
    <property type="entry name" value="PYRIDINIUM-3,5-BISTHIOCARBOXYLIC ACID MONONUCLEOTIDE NICKEL INSERTION PROTEIN"/>
    <property type="match status" value="1"/>
</dbReference>
<dbReference type="Pfam" id="PF01969">
    <property type="entry name" value="Ni_insertion"/>
    <property type="match status" value="1"/>
</dbReference>
<gene>
    <name evidence="1" type="primary">larC</name>
    <name type="ordered locus">SSP0174</name>
</gene>
<name>LARC_STAS1</name>
<reference key="1">
    <citation type="journal article" date="2005" name="Proc. Natl. Acad. Sci. U.S.A.">
        <title>Whole genome sequence of Staphylococcus saprophyticus reveals the pathogenesis of uncomplicated urinary tract infection.</title>
        <authorList>
            <person name="Kuroda M."/>
            <person name="Yamashita A."/>
            <person name="Hirakawa H."/>
            <person name="Kumano M."/>
            <person name="Morikawa K."/>
            <person name="Higashide M."/>
            <person name="Maruyama A."/>
            <person name="Inose Y."/>
            <person name="Matoba K."/>
            <person name="Toh H."/>
            <person name="Kuhara S."/>
            <person name="Hattori M."/>
            <person name="Ohta T."/>
        </authorList>
    </citation>
    <scope>NUCLEOTIDE SEQUENCE [LARGE SCALE GENOMIC DNA]</scope>
    <source>
        <strain>ATCC 15305 / DSM 20229 / NCIMB 8711 / NCTC 7292 / S-41</strain>
    </source>
</reference>